<keyword id="KW-0963">Cytoplasm</keyword>
<keyword id="KW-0378">Hydrolase</keyword>
<keyword id="KW-0479">Metal-binding</keyword>
<keyword id="KW-0547">Nucleotide-binding</keyword>
<dbReference type="EC" id="3.1.3.5" evidence="1"/>
<dbReference type="EMBL" id="CP001661">
    <property type="protein sequence ID" value="ACT17611.1"/>
    <property type="molecule type" value="Genomic_DNA"/>
</dbReference>
<dbReference type="SMR" id="C6E582"/>
<dbReference type="STRING" id="443144.GM21_1555"/>
<dbReference type="KEGG" id="gem:GM21_1555"/>
<dbReference type="eggNOG" id="COG0496">
    <property type="taxonomic scope" value="Bacteria"/>
</dbReference>
<dbReference type="HOGENOM" id="CLU_045192_1_2_7"/>
<dbReference type="OrthoDB" id="9780815at2"/>
<dbReference type="GO" id="GO:0005737">
    <property type="term" value="C:cytoplasm"/>
    <property type="evidence" value="ECO:0007669"/>
    <property type="project" value="UniProtKB-SubCell"/>
</dbReference>
<dbReference type="GO" id="GO:0008254">
    <property type="term" value="F:3'-nucleotidase activity"/>
    <property type="evidence" value="ECO:0007669"/>
    <property type="project" value="TreeGrafter"/>
</dbReference>
<dbReference type="GO" id="GO:0008253">
    <property type="term" value="F:5'-nucleotidase activity"/>
    <property type="evidence" value="ECO:0007669"/>
    <property type="project" value="UniProtKB-UniRule"/>
</dbReference>
<dbReference type="GO" id="GO:0004309">
    <property type="term" value="F:exopolyphosphatase activity"/>
    <property type="evidence" value="ECO:0007669"/>
    <property type="project" value="TreeGrafter"/>
</dbReference>
<dbReference type="GO" id="GO:0046872">
    <property type="term" value="F:metal ion binding"/>
    <property type="evidence" value="ECO:0007669"/>
    <property type="project" value="UniProtKB-UniRule"/>
</dbReference>
<dbReference type="GO" id="GO:0000166">
    <property type="term" value="F:nucleotide binding"/>
    <property type="evidence" value="ECO:0007669"/>
    <property type="project" value="UniProtKB-KW"/>
</dbReference>
<dbReference type="FunFam" id="3.40.1210.10:FF:000001">
    <property type="entry name" value="5'/3'-nucleotidase SurE"/>
    <property type="match status" value="1"/>
</dbReference>
<dbReference type="Gene3D" id="3.40.1210.10">
    <property type="entry name" value="Survival protein SurE-like phosphatase/nucleotidase"/>
    <property type="match status" value="1"/>
</dbReference>
<dbReference type="HAMAP" id="MF_00060">
    <property type="entry name" value="SurE"/>
    <property type="match status" value="1"/>
</dbReference>
<dbReference type="InterPro" id="IPR030048">
    <property type="entry name" value="SurE"/>
</dbReference>
<dbReference type="InterPro" id="IPR002828">
    <property type="entry name" value="SurE-like_Pase/nucleotidase"/>
</dbReference>
<dbReference type="InterPro" id="IPR036523">
    <property type="entry name" value="SurE-like_sf"/>
</dbReference>
<dbReference type="NCBIfam" id="NF001489">
    <property type="entry name" value="PRK00346.1-3"/>
    <property type="match status" value="1"/>
</dbReference>
<dbReference type="NCBIfam" id="NF001490">
    <property type="entry name" value="PRK00346.1-4"/>
    <property type="match status" value="1"/>
</dbReference>
<dbReference type="NCBIfam" id="TIGR00087">
    <property type="entry name" value="surE"/>
    <property type="match status" value="1"/>
</dbReference>
<dbReference type="PANTHER" id="PTHR30457">
    <property type="entry name" value="5'-NUCLEOTIDASE SURE"/>
    <property type="match status" value="1"/>
</dbReference>
<dbReference type="PANTHER" id="PTHR30457:SF12">
    <property type="entry name" value="5'_3'-NUCLEOTIDASE SURE"/>
    <property type="match status" value="1"/>
</dbReference>
<dbReference type="Pfam" id="PF01975">
    <property type="entry name" value="SurE"/>
    <property type="match status" value="1"/>
</dbReference>
<dbReference type="SUPFAM" id="SSF64167">
    <property type="entry name" value="SurE-like"/>
    <property type="match status" value="1"/>
</dbReference>
<reference key="1">
    <citation type="submission" date="2009-07" db="EMBL/GenBank/DDBJ databases">
        <title>Complete sequence of Geobacter sp. M21.</title>
        <authorList>
            <consortium name="US DOE Joint Genome Institute"/>
            <person name="Lucas S."/>
            <person name="Copeland A."/>
            <person name="Lapidus A."/>
            <person name="Glavina del Rio T."/>
            <person name="Dalin E."/>
            <person name="Tice H."/>
            <person name="Bruce D."/>
            <person name="Goodwin L."/>
            <person name="Pitluck S."/>
            <person name="Saunders E."/>
            <person name="Brettin T."/>
            <person name="Detter J.C."/>
            <person name="Han C."/>
            <person name="Larimer F."/>
            <person name="Land M."/>
            <person name="Hauser L."/>
            <person name="Kyrpides N."/>
            <person name="Ovchinnikova G."/>
            <person name="Lovley D."/>
        </authorList>
    </citation>
    <scope>NUCLEOTIDE SEQUENCE [LARGE SCALE GENOMIC DNA]</scope>
    <source>
        <strain>M21</strain>
    </source>
</reference>
<feature type="chain" id="PRO_1000202369" description="5'-nucleotidase SurE">
    <location>
        <begin position="1"/>
        <end position="248"/>
    </location>
</feature>
<feature type="binding site" evidence="1">
    <location>
        <position position="8"/>
    </location>
    <ligand>
        <name>a divalent metal cation</name>
        <dbReference type="ChEBI" id="CHEBI:60240"/>
    </ligand>
</feature>
<feature type="binding site" evidence="1">
    <location>
        <position position="9"/>
    </location>
    <ligand>
        <name>a divalent metal cation</name>
        <dbReference type="ChEBI" id="CHEBI:60240"/>
    </ligand>
</feature>
<feature type="binding site" evidence="1">
    <location>
        <position position="39"/>
    </location>
    <ligand>
        <name>a divalent metal cation</name>
        <dbReference type="ChEBI" id="CHEBI:60240"/>
    </ligand>
</feature>
<feature type="binding site" evidence="1">
    <location>
        <position position="91"/>
    </location>
    <ligand>
        <name>a divalent metal cation</name>
        <dbReference type="ChEBI" id="CHEBI:60240"/>
    </ligand>
</feature>
<comment type="function">
    <text evidence="1">Nucleotidase that shows phosphatase activity on nucleoside 5'-monophosphates.</text>
</comment>
<comment type="catalytic activity">
    <reaction evidence="1">
        <text>a ribonucleoside 5'-phosphate + H2O = a ribonucleoside + phosphate</text>
        <dbReference type="Rhea" id="RHEA:12484"/>
        <dbReference type="ChEBI" id="CHEBI:15377"/>
        <dbReference type="ChEBI" id="CHEBI:18254"/>
        <dbReference type="ChEBI" id="CHEBI:43474"/>
        <dbReference type="ChEBI" id="CHEBI:58043"/>
        <dbReference type="EC" id="3.1.3.5"/>
    </reaction>
</comment>
<comment type="cofactor">
    <cofactor evidence="1">
        <name>a divalent metal cation</name>
        <dbReference type="ChEBI" id="CHEBI:60240"/>
    </cofactor>
    <text evidence="1">Binds 1 divalent metal cation per subunit.</text>
</comment>
<comment type="subcellular location">
    <subcellularLocation>
        <location evidence="1">Cytoplasm</location>
    </subcellularLocation>
</comment>
<comment type="similarity">
    <text evidence="1">Belongs to the SurE nucleotidase family.</text>
</comment>
<protein>
    <recommendedName>
        <fullName evidence="1">5'-nucleotidase SurE</fullName>
        <ecNumber evidence="1">3.1.3.5</ecNumber>
    </recommendedName>
    <alternativeName>
        <fullName evidence="1">Nucleoside 5'-monophosphate phosphohydrolase</fullName>
    </alternativeName>
</protein>
<gene>
    <name evidence="1" type="primary">surE</name>
    <name type="ordered locus">GM21_1555</name>
</gene>
<accession>C6E582</accession>
<evidence type="ECO:0000255" key="1">
    <source>
        <dbReference type="HAMAP-Rule" id="MF_00060"/>
    </source>
</evidence>
<organism>
    <name type="scientific">Geobacter sp. (strain M21)</name>
    <dbReference type="NCBI Taxonomy" id="443144"/>
    <lineage>
        <taxon>Bacteria</taxon>
        <taxon>Pseudomonadati</taxon>
        <taxon>Thermodesulfobacteriota</taxon>
        <taxon>Desulfuromonadia</taxon>
        <taxon>Geobacterales</taxon>
        <taxon>Geobacteraceae</taxon>
        <taxon>Geobacter</taxon>
    </lineage>
</organism>
<proteinExistence type="inferred from homology"/>
<sequence>MKILLTNDDGVHSPGLAALIKKVSEVAEVVVVAPDREQSAVSHALTLHHPLRAARIRANVFSVEGTPTDCVNLGIHSLLSYRPDLVISGVNRGANIADDVTYSGTVAAALEATLMGIPAIAVSLVTRSAGEHFEAAAACAAKLAVTVHQKGLPRDTYLNVNVPDLPAESLLPPLITCQGKRSYEGTIVDKVDPRGRNYYWIGTTDLSFEDIPGTDYHAVSRGHVSISPLHIDLTNHASIETLKSWELP</sequence>
<name>SURE_GEOSM</name>